<name>AIDAA_XENLA</name>
<dbReference type="EMBL" id="BC060024">
    <property type="protein sequence ID" value="AAH60024.1"/>
    <property type="molecule type" value="mRNA"/>
</dbReference>
<dbReference type="RefSeq" id="NP_001083192.1">
    <property type="nucleotide sequence ID" value="NM_001089723.1"/>
</dbReference>
<dbReference type="SMR" id="Q6PAW0"/>
<dbReference type="GeneID" id="398793"/>
<dbReference type="KEGG" id="xla:398793"/>
<dbReference type="AGR" id="Xenbase:XB-GENE-6255426"/>
<dbReference type="CTD" id="398793"/>
<dbReference type="Xenbase" id="XB-GENE-6255426">
    <property type="gene designation" value="aida.L"/>
</dbReference>
<dbReference type="OMA" id="HWSARFR"/>
<dbReference type="OrthoDB" id="428576at2759"/>
<dbReference type="Proteomes" id="UP000186698">
    <property type="component" value="Chromosome 5L"/>
</dbReference>
<dbReference type="Bgee" id="398793">
    <property type="expression patterns" value="Expressed in lung and 19 other cell types or tissues"/>
</dbReference>
<dbReference type="GO" id="GO:0016020">
    <property type="term" value="C:membrane"/>
    <property type="evidence" value="ECO:0000318"/>
    <property type="project" value="GO_Central"/>
</dbReference>
<dbReference type="GO" id="GO:0035091">
    <property type="term" value="F:phosphatidylinositol binding"/>
    <property type="evidence" value="ECO:0000318"/>
    <property type="project" value="GO_Central"/>
</dbReference>
<dbReference type="GO" id="GO:0048264">
    <property type="term" value="P:determination of ventral identity"/>
    <property type="evidence" value="ECO:0000318"/>
    <property type="project" value="GO_Central"/>
</dbReference>
<dbReference type="GO" id="GO:0009953">
    <property type="term" value="P:dorsal/ventral pattern formation"/>
    <property type="evidence" value="ECO:0000250"/>
    <property type="project" value="UniProtKB"/>
</dbReference>
<dbReference type="GO" id="GO:0046329">
    <property type="term" value="P:negative regulation of JNK cascade"/>
    <property type="evidence" value="ECO:0000250"/>
    <property type="project" value="UniProtKB"/>
</dbReference>
<dbReference type="GO" id="GO:0031333">
    <property type="term" value="P:negative regulation of protein-containing complex assembly"/>
    <property type="evidence" value="ECO:0000250"/>
    <property type="project" value="UniProtKB"/>
</dbReference>
<dbReference type="FunFam" id="1.20.120.360:FF:000001">
    <property type="entry name" value="Axin interactor, dorsalization-associated protein"/>
    <property type="match status" value="1"/>
</dbReference>
<dbReference type="FunFam" id="2.60.40.150:FF:000059">
    <property type="entry name" value="Axin interactor, dorsalization-associated protein"/>
    <property type="match status" value="1"/>
</dbReference>
<dbReference type="Gene3D" id="1.20.120.360">
    <property type="entry name" value="Axin interactor, dorsalization-associated protein, N-terminal domain"/>
    <property type="match status" value="1"/>
</dbReference>
<dbReference type="Gene3D" id="2.60.40.150">
    <property type="entry name" value="C2 domain"/>
    <property type="match status" value="1"/>
</dbReference>
<dbReference type="InterPro" id="IPR025939">
    <property type="entry name" value="Aida_C"/>
</dbReference>
<dbReference type="InterPro" id="IPR023421">
    <property type="entry name" value="AIDA_N"/>
</dbReference>
<dbReference type="InterPro" id="IPR036818">
    <property type="entry name" value="AIDA_N_sf"/>
</dbReference>
<dbReference type="InterPro" id="IPR035892">
    <property type="entry name" value="C2_domain_sf"/>
</dbReference>
<dbReference type="PANTHER" id="PTHR28654">
    <property type="entry name" value="AXIN INTERACTOR, DORSALIZATION-ASSOCIATED PROTEIN"/>
    <property type="match status" value="1"/>
</dbReference>
<dbReference type="PANTHER" id="PTHR28654:SF1">
    <property type="entry name" value="AXIN INTERACTOR, DORSALIZATION-ASSOCIATED PROTEIN"/>
    <property type="match status" value="1"/>
</dbReference>
<dbReference type="Pfam" id="PF14186">
    <property type="entry name" value="Aida_C2"/>
    <property type="match status" value="1"/>
</dbReference>
<dbReference type="Pfam" id="PF08910">
    <property type="entry name" value="Aida_N"/>
    <property type="match status" value="1"/>
</dbReference>
<dbReference type="SUPFAM" id="SSF109779">
    <property type="entry name" value="Domain from hypothetical 2610208m17rik protein"/>
    <property type="match status" value="1"/>
</dbReference>
<dbReference type="PROSITE" id="PS51911">
    <property type="entry name" value="C2_AIDA"/>
    <property type="match status" value="1"/>
</dbReference>
<protein>
    <recommendedName>
        <fullName>Axin interactor, dorsalization-associated protein A</fullName>
    </recommendedName>
    <alternativeName>
        <fullName>Axin interaction partner and dorsalization antagonist A</fullName>
    </alternativeName>
</protein>
<gene>
    <name type="primary">aida-a</name>
</gene>
<proteinExistence type="evidence at transcript level"/>
<evidence type="ECO:0000250" key="1"/>
<evidence type="ECO:0000255" key="2">
    <source>
        <dbReference type="PROSITE-ProRule" id="PRU01259"/>
    </source>
</evidence>
<evidence type="ECO:0000305" key="3"/>
<comment type="function">
    <text evidence="1">Acts as a ventralizing factor during embryogenesis. Inhibits axin-mediated JNK activation by binding axin and disrupting axin homodimerization. This in turn antagonizes a Wnt/beta-catenin-independent dorsalization pathway activated by axin/JNK-signaling (By similarity).</text>
</comment>
<comment type="similarity">
    <text evidence="2 3">Belongs to the AIDA family.</text>
</comment>
<accession>Q6PAW0</accession>
<organism>
    <name type="scientific">Xenopus laevis</name>
    <name type="common">African clawed frog</name>
    <dbReference type="NCBI Taxonomy" id="8355"/>
    <lineage>
        <taxon>Eukaryota</taxon>
        <taxon>Metazoa</taxon>
        <taxon>Chordata</taxon>
        <taxon>Craniata</taxon>
        <taxon>Vertebrata</taxon>
        <taxon>Euteleostomi</taxon>
        <taxon>Amphibia</taxon>
        <taxon>Batrachia</taxon>
        <taxon>Anura</taxon>
        <taxon>Pipoidea</taxon>
        <taxon>Pipidae</taxon>
        <taxon>Xenopodinae</taxon>
        <taxon>Xenopus</taxon>
        <taxon>Xenopus</taxon>
    </lineage>
</organism>
<feature type="chain" id="PRO_0000305282" description="Axin interactor, dorsalization-associated protein A">
    <location>
        <begin position="1"/>
        <end position="305"/>
    </location>
</feature>
<feature type="domain" description="C2 Aida-type" evidence="2">
    <location>
        <begin position="156"/>
        <end position="303"/>
    </location>
</feature>
<feature type="region of interest" description="Axin-binding" evidence="1">
    <location>
        <begin position="153"/>
        <end position="220"/>
    </location>
</feature>
<reference key="1">
    <citation type="submission" date="2003-10" db="EMBL/GenBank/DDBJ databases">
        <authorList>
            <consortium name="NIH - Xenopus Gene Collection (XGC) project"/>
        </authorList>
    </citation>
    <scope>NUCLEOTIDE SEQUENCE [LARGE SCALE MRNA]</scope>
    <source>
        <tissue>Kidney</tissue>
    </source>
</reference>
<keyword id="KW-0217">Developmental protein</keyword>
<keyword id="KW-1185">Reference proteome</keyword>
<sequence>MSDMNKILHKWSASLKKGTDFDSWGQLVEAIDEYQILARQLQKEAQSPANSSDFTEDQKKTIGKIATCLGLRSAALQYTQSQEGFTLEDVKKLEPILSSIVTFNKEFPFDVQPVPLRRILAPGEEENLEVDEEEEDGGAGIGSPDLFPARVPGTLLPRLPSEPGMTLLTIKIEKIGLKDAGQCIDPYITVSVKDLNGIDLTPVQDTPMATRKEDTYVHFNVEIEIQKHVEKLTKGAAIFFEFKHYKPKKRFTSTKCFAFMEMDEIKPGQTVIELYKKPTDFKRKKLQLLTKKPLYLHLLQTLLKD</sequence>